<proteinExistence type="inferred from homology"/>
<name>AROD_STRS2</name>
<dbReference type="EC" id="4.2.1.10" evidence="1"/>
<dbReference type="EMBL" id="CP000408">
    <property type="protein sequence ID" value="ABP92436.1"/>
    <property type="molecule type" value="Genomic_DNA"/>
</dbReference>
<dbReference type="SMR" id="A4W247"/>
<dbReference type="KEGG" id="ssv:SSU98_1278"/>
<dbReference type="HOGENOM" id="CLU_064444_0_0_9"/>
<dbReference type="UniPathway" id="UPA00053">
    <property type="reaction ID" value="UER00086"/>
</dbReference>
<dbReference type="GO" id="GO:0003855">
    <property type="term" value="F:3-dehydroquinate dehydratase activity"/>
    <property type="evidence" value="ECO:0007669"/>
    <property type="project" value="UniProtKB-UniRule"/>
</dbReference>
<dbReference type="GO" id="GO:0046279">
    <property type="term" value="P:3,4-dihydroxybenzoate biosynthetic process"/>
    <property type="evidence" value="ECO:0007669"/>
    <property type="project" value="UniProtKB-ARBA"/>
</dbReference>
<dbReference type="GO" id="GO:0008652">
    <property type="term" value="P:amino acid biosynthetic process"/>
    <property type="evidence" value="ECO:0007669"/>
    <property type="project" value="UniProtKB-KW"/>
</dbReference>
<dbReference type="GO" id="GO:0009073">
    <property type="term" value="P:aromatic amino acid family biosynthetic process"/>
    <property type="evidence" value="ECO:0007669"/>
    <property type="project" value="UniProtKB-KW"/>
</dbReference>
<dbReference type="GO" id="GO:0009423">
    <property type="term" value="P:chorismate biosynthetic process"/>
    <property type="evidence" value="ECO:0007669"/>
    <property type="project" value="UniProtKB-UniRule"/>
</dbReference>
<dbReference type="CDD" id="cd00502">
    <property type="entry name" value="DHQase_I"/>
    <property type="match status" value="1"/>
</dbReference>
<dbReference type="Gene3D" id="3.20.20.70">
    <property type="entry name" value="Aldolase class I"/>
    <property type="match status" value="1"/>
</dbReference>
<dbReference type="HAMAP" id="MF_00214">
    <property type="entry name" value="AroD"/>
    <property type="match status" value="1"/>
</dbReference>
<dbReference type="InterPro" id="IPR013785">
    <property type="entry name" value="Aldolase_TIM"/>
</dbReference>
<dbReference type="InterPro" id="IPR001381">
    <property type="entry name" value="DHquinase_I"/>
</dbReference>
<dbReference type="InterPro" id="IPR050146">
    <property type="entry name" value="Type-I_3-dehydroquinase"/>
</dbReference>
<dbReference type="NCBIfam" id="TIGR01093">
    <property type="entry name" value="aroD"/>
    <property type="match status" value="1"/>
</dbReference>
<dbReference type="PANTHER" id="PTHR43699">
    <property type="entry name" value="3-DEHYDROQUINATE DEHYDRATASE"/>
    <property type="match status" value="1"/>
</dbReference>
<dbReference type="PANTHER" id="PTHR43699:SF1">
    <property type="entry name" value="3-DEHYDROQUINATE DEHYDRATASE"/>
    <property type="match status" value="1"/>
</dbReference>
<dbReference type="Pfam" id="PF01487">
    <property type="entry name" value="DHquinase_I"/>
    <property type="match status" value="1"/>
</dbReference>
<dbReference type="SUPFAM" id="SSF51569">
    <property type="entry name" value="Aldolase"/>
    <property type="match status" value="1"/>
</dbReference>
<comment type="function">
    <text evidence="1">Involved in the third step of the chorismate pathway, which leads to the biosynthesis of aromatic amino acids. Catalyzes the cis-dehydration of 3-dehydroquinate (DHQ) and introduces the first double bond of the aromatic ring to yield 3-dehydroshikimate.</text>
</comment>
<comment type="catalytic activity">
    <reaction evidence="1">
        <text>3-dehydroquinate = 3-dehydroshikimate + H2O</text>
        <dbReference type="Rhea" id="RHEA:21096"/>
        <dbReference type="ChEBI" id="CHEBI:15377"/>
        <dbReference type="ChEBI" id="CHEBI:16630"/>
        <dbReference type="ChEBI" id="CHEBI:32364"/>
        <dbReference type="EC" id="4.2.1.10"/>
    </reaction>
</comment>
<comment type="pathway">
    <text evidence="1">Metabolic intermediate biosynthesis; chorismate biosynthesis; chorismate from D-erythrose 4-phosphate and phosphoenolpyruvate: step 3/7.</text>
</comment>
<comment type="subunit">
    <text evidence="1">Homodimer.</text>
</comment>
<comment type="similarity">
    <text evidence="1">Belongs to the type-I 3-dehydroquinase family.</text>
</comment>
<organism>
    <name type="scientific">Streptococcus suis (strain 98HAH33)</name>
    <dbReference type="NCBI Taxonomy" id="391296"/>
    <lineage>
        <taxon>Bacteria</taxon>
        <taxon>Bacillati</taxon>
        <taxon>Bacillota</taxon>
        <taxon>Bacilli</taxon>
        <taxon>Lactobacillales</taxon>
        <taxon>Streptococcaceae</taxon>
        <taxon>Streptococcus</taxon>
    </lineage>
</organism>
<evidence type="ECO:0000255" key="1">
    <source>
        <dbReference type="HAMAP-Rule" id="MF_00214"/>
    </source>
</evidence>
<feature type="chain" id="PRO_1000043202" description="3-dehydroquinate dehydratase">
    <location>
        <begin position="1"/>
        <end position="224"/>
    </location>
</feature>
<feature type="active site" description="Proton donor/acceptor" evidence="1">
    <location>
        <position position="118"/>
    </location>
</feature>
<feature type="active site" description="Schiff-base intermediate with substrate" evidence="1">
    <location>
        <position position="143"/>
    </location>
</feature>
<feature type="binding site" evidence="1">
    <location>
        <begin position="30"/>
        <end position="32"/>
    </location>
    <ligand>
        <name>3-dehydroquinate</name>
        <dbReference type="ChEBI" id="CHEBI:32364"/>
    </ligand>
</feature>
<feature type="binding site" evidence="1">
    <location>
        <position position="62"/>
    </location>
    <ligand>
        <name>3-dehydroquinate</name>
        <dbReference type="ChEBI" id="CHEBI:32364"/>
    </ligand>
</feature>
<feature type="binding site" evidence="1">
    <location>
        <position position="186"/>
    </location>
    <ligand>
        <name>3-dehydroquinate</name>
        <dbReference type="ChEBI" id="CHEBI:32364"/>
    </ligand>
</feature>
<feature type="binding site" evidence="1">
    <location>
        <position position="205"/>
    </location>
    <ligand>
        <name>3-dehydroquinate</name>
        <dbReference type="ChEBI" id="CHEBI:32364"/>
    </ligand>
</feature>
<feature type="binding site" evidence="1">
    <location>
        <position position="209"/>
    </location>
    <ligand>
        <name>3-dehydroquinate</name>
        <dbReference type="ChEBI" id="CHEBI:32364"/>
    </ligand>
</feature>
<gene>
    <name evidence="1" type="primary">aroD</name>
    <name type="ordered locus">SSU98_1278</name>
</gene>
<reference key="1">
    <citation type="journal article" date="2007" name="PLoS ONE">
        <title>A glimpse of streptococcal toxic shock syndrome from comparative genomics of S. suis 2 Chinese isolates.</title>
        <authorList>
            <person name="Chen C."/>
            <person name="Tang J."/>
            <person name="Dong W."/>
            <person name="Wang C."/>
            <person name="Feng Y."/>
            <person name="Wang J."/>
            <person name="Zheng F."/>
            <person name="Pan X."/>
            <person name="Liu D."/>
            <person name="Li M."/>
            <person name="Song Y."/>
            <person name="Zhu X."/>
            <person name="Sun H."/>
            <person name="Feng T."/>
            <person name="Guo Z."/>
            <person name="Ju A."/>
            <person name="Ge J."/>
            <person name="Dong Y."/>
            <person name="Sun W."/>
            <person name="Jiang Y."/>
            <person name="Wang J."/>
            <person name="Yan J."/>
            <person name="Yang H."/>
            <person name="Wang X."/>
            <person name="Gao G.F."/>
            <person name="Yang R."/>
            <person name="Wang J."/>
            <person name="Yu J."/>
        </authorList>
    </citation>
    <scope>NUCLEOTIDE SEQUENCE [LARGE SCALE GENOMIC DNA]</scope>
    <source>
        <strain>98HAH33</strain>
    </source>
</reference>
<sequence>MKIVVPIMPRNLEEVEAIDVERLAEADIVEWRADYLLKDDILRVAPAIFEKCSGKEVVFTIRTTREGGHLDLDDQEYVNVIKEVATLYQPDYIDFEYYSYKSVFEQMLEFPNLVLSYHNFEETPSNYMEIMSELTSLSPAVVKMAVMAKTEQDVLDVMNYTRGFKSLNTEQIFATIAMGELGKLTRIAGVITGSCWTFASLDETSAPGQMSLSNTRKFLEILEN</sequence>
<accession>A4W247</accession>
<keyword id="KW-0028">Amino-acid biosynthesis</keyword>
<keyword id="KW-0057">Aromatic amino acid biosynthesis</keyword>
<keyword id="KW-0456">Lyase</keyword>
<keyword id="KW-0704">Schiff base</keyword>
<protein>
    <recommendedName>
        <fullName evidence="1">3-dehydroquinate dehydratase</fullName>
        <shortName evidence="1">3-dehydroquinase</shortName>
        <ecNumber evidence="1">4.2.1.10</ecNumber>
    </recommendedName>
    <alternativeName>
        <fullName evidence="1">Type I DHQase</fullName>
    </alternativeName>
    <alternativeName>
        <fullName evidence="1">Type I dehydroquinase</fullName>
        <shortName evidence="1">DHQ1</shortName>
    </alternativeName>
</protein>